<protein>
    <recommendedName>
        <fullName evidence="1">4-hydroxy-3-methylbut-2-enyl diphosphate reductase</fullName>
        <shortName evidence="1">HMBPP reductase</shortName>
        <ecNumber evidence="1">1.17.7.4</ecNumber>
    </recommendedName>
</protein>
<gene>
    <name evidence="1" type="primary">ispH</name>
    <name type="ordered locus">Oter_3652</name>
</gene>
<keyword id="KW-0004">4Fe-4S</keyword>
<keyword id="KW-0408">Iron</keyword>
<keyword id="KW-0411">Iron-sulfur</keyword>
<keyword id="KW-0414">Isoprene biosynthesis</keyword>
<keyword id="KW-0479">Metal-binding</keyword>
<keyword id="KW-0560">Oxidoreductase</keyword>
<keyword id="KW-1185">Reference proteome</keyword>
<comment type="function">
    <text evidence="1">Catalyzes the conversion of 1-hydroxy-2-methyl-2-(E)-butenyl 4-diphosphate (HMBPP) into a mixture of isopentenyl diphosphate (IPP) and dimethylallyl diphosphate (DMAPP). Acts in the terminal step of the DOXP/MEP pathway for isoprenoid precursor biosynthesis.</text>
</comment>
<comment type="catalytic activity">
    <reaction evidence="1">
        <text>isopentenyl diphosphate + 2 oxidized [2Fe-2S]-[ferredoxin] + H2O = (2E)-4-hydroxy-3-methylbut-2-enyl diphosphate + 2 reduced [2Fe-2S]-[ferredoxin] + 2 H(+)</text>
        <dbReference type="Rhea" id="RHEA:24488"/>
        <dbReference type="Rhea" id="RHEA-COMP:10000"/>
        <dbReference type="Rhea" id="RHEA-COMP:10001"/>
        <dbReference type="ChEBI" id="CHEBI:15377"/>
        <dbReference type="ChEBI" id="CHEBI:15378"/>
        <dbReference type="ChEBI" id="CHEBI:33737"/>
        <dbReference type="ChEBI" id="CHEBI:33738"/>
        <dbReference type="ChEBI" id="CHEBI:128753"/>
        <dbReference type="ChEBI" id="CHEBI:128769"/>
        <dbReference type="EC" id="1.17.7.4"/>
    </reaction>
</comment>
<comment type="catalytic activity">
    <reaction evidence="1">
        <text>dimethylallyl diphosphate + 2 oxidized [2Fe-2S]-[ferredoxin] + H2O = (2E)-4-hydroxy-3-methylbut-2-enyl diphosphate + 2 reduced [2Fe-2S]-[ferredoxin] + 2 H(+)</text>
        <dbReference type="Rhea" id="RHEA:24825"/>
        <dbReference type="Rhea" id="RHEA-COMP:10000"/>
        <dbReference type="Rhea" id="RHEA-COMP:10001"/>
        <dbReference type="ChEBI" id="CHEBI:15377"/>
        <dbReference type="ChEBI" id="CHEBI:15378"/>
        <dbReference type="ChEBI" id="CHEBI:33737"/>
        <dbReference type="ChEBI" id="CHEBI:33738"/>
        <dbReference type="ChEBI" id="CHEBI:57623"/>
        <dbReference type="ChEBI" id="CHEBI:128753"/>
        <dbReference type="EC" id="1.17.7.4"/>
    </reaction>
</comment>
<comment type="cofactor">
    <cofactor evidence="1">
        <name>[4Fe-4S] cluster</name>
        <dbReference type="ChEBI" id="CHEBI:49883"/>
    </cofactor>
    <text evidence="1">Binds 1 [4Fe-4S] cluster per subunit.</text>
</comment>
<comment type="pathway">
    <text evidence="1">Isoprenoid biosynthesis; dimethylallyl diphosphate biosynthesis; dimethylallyl diphosphate from (2E)-4-hydroxy-3-methylbutenyl diphosphate: step 1/1.</text>
</comment>
<comment type="pathway">
    <text evidence="1">Isoprenoid biosynthesis; isopentenyl diphosphate biosynthesis via DXP pathway; isopentenyl diphosphate from 1-deoxy-D-xylulose 5-phosphate: step 6/6.</text>
</comment>
<comment type="similarity">
    <text evidence="1">Belongs to the IspH family.</text>
</comment>
<sequence length="289" mass="31734">MKVLRAKSAGFCWGVERAIEITRDYAHQGRKPVYTDGPLIHNRQMMEKLSEEGIREVGDYQSRANIAVNPAAPGENPVMVVRAHGISPERRNYLKSLGMDFKDATCPDVGIIAGKIRLHAKKGYATIIFGDKNHPEAIGLLGYTEGRGYCITSKADIDALPALERVCMVSQSTMFMHEFAELSEYARQKFKEVLVFDTICQATKDRQTDVVALARQGAQAIVVIGGHHSANTVKLASLARLQNLPTYHIETAAELSPEEMKKFTVIGVTAGASTPEFLISEVCAKLEAL</sequence>
<reference key="1">
    <citation type="journal article" date="2011" name="J. Bacteriol.">
        <title>Genome sequence of the verrucomicrobium Opitutus terrae PB90-1, an abundant inhabitant of rice paddy soil ecosystems.</title>
        <authorList>
            <person name="van Passel M.W."/>
            <person name="Kant R."/>
            <person name="Palva A."/>
            <person name="Copeland A."/>
            <person name="Lucas S."/>
            <person name="Lapidus A."/>
            <person name="Glavina del Rio T."/>
            <person name="Pitluck S."/>
            <person name="Goltsman E."/>
            <person name="Clum A."/>
            <person name="Sun H."/>
            <person name="Schmutz J."/>
            <person name="Larimer F.W."/>
            <person name="Land M.L."/>
            <person name="Hauser L."/>
            <person name="Kyrpides N."/>
            <person name="Mikhailova N."/>
            <person name="Richardson P.P."/>
            <person name="Janssen P.H."/>
            <person name="de Vos W.M."/>
            <person name="Smidt H."/>
        </authorList>
    </citation>
    <scope>NUCLEOTIDE SEQUENCE [LARGE SCALE GENOMIC DNA]</scope>
    <source>
        <strain>DSM 11246 / JCM 15787 / PB90-1</strain>
    </source>
</reference>
<organism>
    <name type="scientific">Opitutus terrae (strain DSM 11246 / JCM 15787 / PB90-1)</name>
    <dbReference type="NCBI Taxonomy" id="452637"/>
    <lineage>
        <taxon>Bacteria</taxon>
        <taxon>Pseudomonadati</taxon>
        <taxon>Verrucomicrobiota</taxon>
        <taxon>Opitutia</taxon>
        <taxon>Opitutales</taxon>
        <taxon>Opitutaceae</taxon>
        <taxon>Opitutus</taxon>
    </lineage>
</organism>
<evidence type="ECO:0000255" key="1">
    <source>
        <dbReference type="HAMAP-Rule" id="MF_00191"/>
    </source>
</evidence>
<dbReference type="EC" id="1.17.7.4" evidence="1"/>
<dbReference type="EMBL" id="CP001032">
    <property type="protein sequence ID" value="ACB76929.1"/>
    <property type="molecule type" value="Genomic_DNA"/>
</dbReference>
<dbReference type="RefSeq" id="WP_012376458.1">
    <property type="nucleotide sequence ID" value="NC_010571.1"/>
</dbReference>
<dbReference type="SMR" id="B1ZXD4"/>
<dbReference type="STRING" id="452637.Oter_3652"/>
<dbReference type="KEGG" id="ote:Oter_3652"/>
<dbReference type="eggNOG" id="COG0761">
    <property type="taxonomic scope" value="Bacteria"/>
</dbReference>
<dbReference type="HOGENOM" id="CLU_027486_0_1_0"/>
<dbReference type="OrthoDB" id="9804077at2"/>
<dbReference type="UniPathway" id="UPA00056">
    <property type="reaction ID" value="UER00097"/>
</dbReference>
<dbReference type="UniPathway" id="UPA00059">
    <property type="reaction ID" value="UER00105"/>
</dbReference>
<dbReference type="Proteomes" id="UP000007013">
    <property type="component" value="Chromosome"/>
</dbReference>
<dbReference type="GO" id="GO:0051539">
    <property type="term" value="F:4 iron, 4 sulfur cluster binding"/>
    <property type="evidence" value="ECO:0007669"/>
    <property type="project" value="UniProtKB-UniRule"/>
</dbReference>
<dbReference type="GO" id="GO:0051745">
    <property type="term" value="F:4-hydroxy-3-methylbut-2-enyl diphosphate reductase activity"/>
    <property type="evidence" value="ECO:0007669"/>
    <property type="project" value="UniProtKB-UniRule"/>
</dbReference>
<dbReference type="GO" id="GO:0046872">
    <property type="term" value="F:metal ion binding"/>
    <property type="evidence" value="ECO:0007669"/>
    <property type="project" value="UniProtKB-KW"/>
</dbReference>
<dbReference type="GO" id="GO:0050992">
    <property type="term" value="P:dimethylallyl diphosphate biosynthetic process"/>
    <property type="evidence" value="ECO:0007669"/>
    <property type="project" value="UniProtKB-UniRule"/>
</dbReference>
<dbReference type="GO" id="GO:0019288">
    <property type="term" value="P:isopentenyl diphosphate biosynthetic process, methylerythritol 4-phosphate pathway"/>
    <property type="evidence" value="ECO:0007669"/>
    <property type="project" value="UniProtKB-UniRule"/>
</dbReference>
<dbReference type="GO" id="GO:0016114">
    <property type="term" value="P:terpenoid biosynthetic process"/>
    <property type="evidence" value="ECO:0007669"/>
    <property type="project" value="UniProtKB-UniRule"/>
</dbReference>
<dbReference type="CDD" id="cd13944">
    <property type="entry name" value="lytB_ispH"/>
    <property type="match status" value="1"/>
</dbReference>
<dbReference type="Gene3D" id="3.40.50.11270">
    <property type="match status" value="1"/>
</dbReference>
<dbReference type="Gene3D" id="3.40.1010.20">
    <property type="entry name" value="4-hydroxy-3-methylbut-2-enyl diphosphate reductase, catalytic domain"/>
    <property type="match status" value="2"/>
</dbReference>
<dbReference type="HAMAP" id="MF_00191">
    <property type="entry name" value="IspH"/>
    <property type="match status" value="1"/>
</dbReference>
<dbReference type="InterPro" id="IPR003451">
    <property type="entry name" value="LytB/IspH"/>
</dbReference>
<dbReference type="NCBIfam" id="TIGR00216">
    <property type="entry name" value="ispH_lytB"/>
    <property type="match status" value="1"/>
</dbReference>
<dbReference type="PANTHER" id="PTHR30426">
    <property type="entry name" value="4-HYDROXY-3-METHYLBUT-2-ENYL DIPHOSPHATE REDUCTASE"/>
    <property type="match status" value="1"/>
</dbReference>
<dbReference type="PANTHER" id="PTHR30426:SF0">
    <property type="entry name" value="4-HYDROXY-3-METHYLBUT-2-ENYL DIPHOSPHATE REDUCTASE"/>
    <property type="match status" value="1"/>
</dbReference>
<dbReference type="Pfam" id="PF02401">
    <property type="entry name" value="LYTB"/>
    <property type="match status" value="1"/>
</dbReference>
<name>ISPH_OPITP</name>
<feature type="chain" id="PRO_1000098960" description="4-hydroxy-3-methylbut-2-enyl diphosphate reductase">
    <location>
        <begin position="1"/>
        <end position="289"/>
    </location>
</feature>
<feature type="active site" description="Proton donor" evidence="1">
    <location>
        <position position="136"/>
    </location>
</feature>
<feature type="binding site" evidence="1">
    <location>
        <position position="12"/>
    </location>
    <ligand>
        <name>[4Fe-4S] cluster</name>
        <dbReference type="ChEBI" id="CHEBI:49883"/>
    </ligand>
</feature>
<feature type="binding site" evidence="1">
    <location>
        <position position="41"/>
    </location>
    <ligand>
        <name>(2E)-4-hydroxy-3-methylbut-2-enyl diphosphate</name>
        <dbReference type="ChEBI" id="CHEBI:128753"/>
    </ligand>
</feature>
<feature type="binding site" evidence="1">
    <location>
        <position position="41"/>
    </location>
    <ligand>
        <name>dimethylallyl diphosphate</name>
        <dbReference type="ChEBI" id="CHEBI:57623"/>
    </ligand>
</feature>
<feature type="binding site" evidence="1">
    <location>
        <position position="41"/>
    </location>
    <ligand>
        <name>isopentenyl diphosphate</name>
        <dbReference type="ChEBI" id="CHEBI:128769"/>
    </ligand>
</feature>
<feature type="binding site" evidence="1">
    <location>
        <position position="84"/>
    </location>
    <ligand>
        <name>(2E)-4-hydroxy-3-methylbut-2-enyl diphosphate</name>
        <dbReference type="ChEBI" id="CHEBI:128753"/>
    </ligand>
</feature>
<feature type="binding site" evidence="1">
    <location>
        <position position="84"/>
    </location>
    <ligand>
        <name>dimethylallyl diphosphate</name>
        <dbReference type="ChEBI" id="CHEBI:57623"/>
    </ligand>
</feature>
<feature type="binding site" evidence="1">
    <location>
        <position position="84"/>
    </location>
    <ligand>
        <name>isopentenyl diphosphate</name>
        <dbReference type="ChEBI" id="CHEBI:128769"/>
    </ligand>
</feature>
<feature type="binding site" evidence="1">
    <location>
        <position position="106"/>
    </location>
    <ligand>
        <name>[4Fe-4S] cluster</name>
        <dbReference type="ChEBI" id="CHEBI:49883"/>
    </ligand>
</feature>
<feature type="binding site" evidence="1">
    <location>
        <position position="134"/>
    </location>
    <ligand>
        <name>(2E)-4-hydroxy-3-methylbut-2-enyl diphosphate</name>
        <dbReference type="ChEBI" id="CHEBI:128753"/>
    </ligand>
</feature>
<feature type="binding site" evidence="1">
    <location>
        <position position="134"/>
    </location>
    <ligand>
        <name>dimethylallyl diphosphate</name>
        <dbReference type="ChEBI" id="CHEBI:57623"/>
    </ligand>
</feature>
<feature type="binding site" evidence="1">
    <location>
        <position position="134"/>
    </location>
    <ligand>
        <name>isopentenyl diphosphate</name>
        <dbReference type="ChEBI" id="CHEBI:128769"/>
    </ligand>
</feature>
<feature type="binding site" evidence="1">
    <location>
        <position position="172"/>
    </location>
    <ligand>
        <name>(2E)-4-hydroxy-3-methylbut-2-enyl diphosphate</name>
        <dbReference type="ChEBI" id="CHEBI:128753"/>
    </ligand>
</feature>
<feature type="binding site" evidence="1">
    <location>
        <position position="200"/>
    </location>
    <ligand>
        <name>[4Fe-4S] cluster</name>
        <dbReference type="ChEBI" id="CHEBI:49883"/>
    </ligand>
</feature>
<feature type="binding site" evidence="1">
    <location>
        <position position="229"/>
    </location>
    <ligand>
        <name>(2E)-4-hydroxy-3-methylbut-2-enyl diphosphate</name>
        <dbReference type="ChEBI" id="CHEBI:128753"/>
    </ligand>
</feature>
<feature type="binding site" evidence="1">
    <location>
        <position position="229"/>
    </location>
    <ligand>
        <name>dimethylallyl diphosphate</name>
        <dbReference type="ChEBI" id="CHEBI:57623"/>
    </ligand>
</feature>
<feature type="binding site" evidence="1">
    <location>
        <position position="229"/>
    </location>
    <ligand>
        <name>isopentenyl diphosphate</name>
        <dbReference type="ChEBI" id="CHEBI:128769"/>
    </ligand>
</feature>
<feature type="binding site" evidence="1">
    <location>
        <position position="231"/>
    </location>
    <ligand>
        <name>(2E)-4-hydroxy-3-methylbut-2-enyl diphosphate</name>
        <dbReference type="ChEBI" id="CHEBI:128753"/>
    </ligand>
</feature>
<feature type="binding site" evidence="1">
    <location>
        <position position="231"/>
    </location>
    <ligand>
        <name>dimethylallyl diphosphate</name>
        <dbReference type="ChEBI" id="CHEBI:57623"/>
    </ligand>
</feature>
<feature type="binding site" evidence="1">
    <location>
        <position position="231"/>
    </location>
    <ligand>
        <name>isopentenyl diphosphate</name>
        <dbReference type="ChEBI" id="CHEBI:128769"/>
    </ligand>
</feature>
<feature type="binding site" evidence="1">
    <location>
        <position position="273"/>
    </location>
    <ligand>
        <name>(2E)-4-hydroxy-3-methylbut-2-enyl diphosphate</name>
        <dbReference type="ChEBI" id="CHEBI:128753"/>
    </ligand>
</feature>
<feature type="binding site" evidence="1">
    <location>
        <position position="273"/>
    </location>
    <ligand>
        <name>dimethylallyl diphosphate</name>
        <dbReference type="ChEBI" id="CHEBI:57623"/>
    </ligand>
</feature>
<feature type="binding site" evidence="1">
    <location>
        <position position="273"/>
    </location>
    <ligand>
        <name>isopentenyl diphosphate</name>
        <dbReference type="ChEBI" id="CHEBI:128769"/>
    </ligand>
</feature>
<accession>B1ZXD4</accession>
<proteinExistence type="inferred from homology"/>